<comment type="function">
    <text evidence="2">Repair polymerase that plays a key role in base-excision repair. During this process, the damaged base is excised by specific DNA glycosylases, the DNA backbone is nicked at the abasic site by an apurinic/apyrimidic (AP) endonuclease, and POLB removes 5'-deoxyribose-phosphate from the preincised AP site acting as a 5'-deoxyribose-phosphate lyase (5'-dRP lyase); through its DNA polymerase activity, it adds one nucleotide to the 3' end of the arising single-nucleotide gap. Conducts 'gap-filling' DNA synthesis in a stepwise distributive fashion rather than in a processive fashion as for other DNA polymerases. It is also able to cleave sugar-phosphate bonds 3' to an intact AP site, acting as an AP lyase.</text>
</comment>
<comment type="catalytic activity">
    <reaction evidence="2">
        <text>DNA(n) + a 2'-deoxyribonucleoside 5'-triphosphate = DNA(n+1) + diphosphate</text>
        <dbReference type="Rhea" id="RHEA:22508"/>
        <dbReference type="Rhea" id="RHEA-COMP:17339"/>
        <dbReference type="Rhea" id="RHEA-COMP:17340"/>
        <dbReference type="ChEBI" id="CHEBI:33019"/>
        <dbReference type="ChEBI" id="CHEBI:61560"/>
        <dbReference type="ChEBI" id="CHEBI:173112"/>
        <dbReference type="EC" id="2.7.7.7"/>
    </reaction>
</comment>
<comment type="catalytic activity">
    <reaction evidence="2">
        <text>a 5'-end 2'-deoxyribose-2'-deoxyribonucleotide-DNA = (2E,4S)-4-hydroxypenten-2-al-5-phosphate + a 5'-end 5'-phospho-2'-deoxyribonucleoside-DNA + H(+)</text>
        <dbReference type="Rhea" id="RHEA:76255"/>
        <dbReference type="Rhea" id="RHEA-COMP:13180"/>
        <dbReference type="Rhea" id="RHEA-COMP:18657"/>
        <dbReference type="ChEBI" id="CHEBI:15378"/>
        <dbReference type="ChEBI" id="CHEBI:136412"/>
        <dbReference type="ChEBI" id="CHEBI:195194"/>
        <dbReference type="ChEBI" id="CHEBI:195195"/>
    </reaction>
</comment>
<comment type="catalytic activity">
    <reaction evidence="2">
        <text>2'-deoxyribonucleotide-(2'-deoxyribose 5'-phosphate)-2'-deoxyribonucleotide-DNA = a 3'-end 2'-deoxyribonucleotide-(2,3-dehydro-2,3-deoxyribose 5'-phosphate)-DNA + a 5'-end 5'-phospho-2'-deoxyribonucleoside-DNA + H(+)</text>
        <dbReference type="Rhea" id="RHEA:66592"/>
        <dbReference type="Rhea" id="RHEA-COMP:13180"/>
        <dbReference type="Rhea" id="RHEA-COMP:16897"/>
        <dbReference type="Rhea" id="RHEA-COMP:17067"/>
        <dbReference type="ChEBI" id="CHEBI:15378"/>
        <dbReference type="ChEBI" id="CHEBI:136412"/>
        <dbReference type="ChEBI" id="CHEBI:157695"/>
        <dbReference type="ChEBI" id="CHEBI:167181"/>
        <dbReference type="EC" id="4.2.99.18"/>
    </reaction>
</comment>
<comment type="cofactor">
    <cofactor evidence="2">
        <name>Mg(2+)</name>
        <dbReference type="ChEBI" id="CHEBI:18420"/>
    </cofactor>
    <text evidence="2">Binds 2 magnesium ions per subunit.</text>
</comment>
<comment type="subunit">
    <text evidence="2">Monomer (By similarity). Binds single-stranded DNA (ssDNA) (By similarity). Interacts with APEX1, LIG1, LIG3, FEN1, PCNA and XRCC1 (By similarity). Interacts with HUWE1/ARF-BP1, STUB1/CHIP and USP47 (By similarity). Interacts with FAM168A (By similarity).</text>
</comment>
<comment type="subcellular location">
    <subcellularLocation>
        <location evidence="2">Nucleus</location>
    </subcellularLocation>
    <subcellularLocation>
        <location evidence="2">Cytoplasm</location>
    </subcellularLocation>
    <text evidence="2">Cytoplasmic in normal conditions. Translocates to the nucleus following DNA damage.</text>
</comment>
<comment type="PTM">
    <text evidence="1">Methylation by PRMT6 stimulates the polymerase activity by enhancing DNA binding and processivity.</text>
</comment>
<comment type="PTM">
    <text evidence="1">Ubiquitinated at Lys-41, Lys-61 and Lys-81: monoubiquitinated by HUWE1/ARF-BP1. Monoubiquitinated protein is then the target of STUB1/CHIP, which catalyzes polyubiquitination from monoubiquitin, leading to degradation by the proteasome. USP47 mediates the deubiquitination of monoubiquitinated protein, preventing polyubiquitination by STUB1/CHIP and its subsequent degradation (By similarity).</text>
</comment>
<comment type="similarity">
    <text evidence="4">Belongs to the DNA polymerase type-X family.</text>
</comment>
<organism>
    <name type="scientific">Bos taurus</name>
    <name type="common">Bovine</name>
    <dbReference type="NCBI Taxonomy" id="9913"/>
    <lineage>
        <taxon>Eukaryota</taxon>
        <taxon>Metazoa</taxon>
        <taxon>Chordata</taxon>
        <taxon>Craniata</taxon>
        <taxon>Vertebrata</taxon>
        <taxon>Euteleostomi</taxon>
        <taxon>Mammalia</taxon>
        <taxon>Eutheria</taxon>
        <taxon>Laurasiatheria</taxon>
        <taxon>Artiodactyla</taxon>
        <taxon>Ruminantia</taxon>
        <taxon>Pecora</taxon>
        <taxon>Bovidae</taxon>
        <taxon>Bovinae</taxon>
        <taxon>Bos</taxon>
    </lineage>
</organism>
<gene>
    <name type="primary">POLB</name>
</gene>
<feature type="chain" id="PRO_0000218777" description="DNA polymerase beta">
    <location>
        <begin position="1"/>
        <end position="335"/>
    </location>
</feature>
<feature type="region of interest" description="DNA-binding" evidence="2">
    <location>
        <begin position="183"/>
        <end position="192"/>
    </location>
</feature>
<feature type="active site" description="Nucleophile; Schiff-base intermediate with DNA; for 5'-dRP lyase activity" evidence="2">
    <location>
        <position position="72"/>
    </location>
</feature>
<feature type="binding site" evidence="2">
    <location>
        <position position="60"/>
    </location>
    <ligand>
        <name>K(+)</name>
        <dbReference type="ChEBI" id="CHEBI:29103"/>
        <label>1</label>
    </ligand>
</feature>
<feature type="binding site" evidence="2">
    <location>
        <position position="60"/>
    </location>
    <ligand>
        <name>Na(+)</name>
        <dbReference type="ChEBI" id="CHEBI:29101"/>
        <label>1</label>
    </ligand>
</feature>
<feature type="binding site" evidence="2">
    <location>
        <position position="62"/>
    </location>
    <ligand>
        <name>K(+)</name>
        <dbReference type="ChEBI" id="CHEBI:29103"/>
        <label>1</label>
    </ligand>
</feature>
<feature type="binding site" evidence="2">
    <location>
        <position position="62"/>
    </location>
    <ligand>
        <name>Na(+)</name>
        <dbReference type="ChEBI" id="CHEBI:29101"/>
        <label>1</label>
    </ligand>
</feature>
<feature type="binding site" evidence="2">
    <location>
        <position position="65"/>
    </location>
    <ligand>
        <name>K(+)</name>
        <dbReference type="ChEBI" id="CHEBI:29103"/>
        <label>1</label>
    </ligand>
</feature>
<feature type="binding site" evidence="2">
    <location>
        <position position="65"/>
    </location>
    <ligand>
        <name>Na(+)</name>
        <dbReference type="ChEBI" id="CHEBI:29101"/>
        <label>1</label>
    </ligand>
</feature>
<feature type="binding site" evidence="2">
    <location>
        <position position="101"/>
    </location>
    <ligand>
        <name>K(+)</name>
        <dbReference type="ChEBI" id="CHEBI:29103"/>
        <label>2</label>
    </ligand>
</feature>
<feature type="binding site" evidence="2">
    <location>
        <position position="101"/>
    </location>
    <ligand>
        <name>Na(+)</name>
        <dbReference type="ChEBI" id="CHEBI:29101"/>
        <label>2</label>
    </ligand>
</feature>
<feature type="binding site" evidence="2">
    <location>
        <position position="103"/>
    </location>
    <ligand>
        <name>K(+)</name>
        <dbReference type="ChEBI" id="CHEBI:29103"/>
        <label>2</label>
    </ligand>
</feature>
<feature type="binding site" evidence="2">
    <location>
        <position position="103"/>
    </location>
    <ligand>
        <name>Na(+)</name>
        <dbReference type="ChEBI" id="CHEBI:29101"/>
        <label>2</label>
    </ligand>
</feature>
<feature type="binding site" evidence="2">
    <location>
        <position position="106"/>
    </location>
    <ligand>
        <name>K(+)</name>
        <dbReference type="ChEBI" id="CHEBI:29103"/>
        <label>2</label>
    </ligand>
</feature>
<feature type="binding site" evidence="2">
    <location>
        <position position="106"/>
    </location>
    <ligand>
        <name>Na(+)</name>
        <dbReference type="ChEBI" id="CHEBI:29101"/>
        <label>2</label>
    </ligand>
</feature>
<feature type="binding site" evidence="2">
    <location>
        <position position="149"/>
    </location>
    <ligand>
        <name>a 2'-deoxyribonucleoside 5'-triphosphate</name>
        <dbReference type="ChEBI" id="CHEBI:61560"/>
    </ligand>
</feature>
<feature type="binding site" evidence="2">
    <location>
        <position position="180"/>
    </location>
    <ligand>
        <name>a 2'-deoxyribonucleoside 5'-triphosphate</name>
        <dbReference type="ChEBI" id="CHEBI:61560"/>
    </ligand>
</feature>
<feature type="binding site" evidence="2">
    <location>
        <position position="183"/>
    </location>
    <ligand>
        <name>a 2'-deoxyribonucleoside 5'-triphosphate</name>
        <dbReference type="ChEBI" id="CHEBI:61560"/>
    </ligand>
</feature>
<feature type="binding site" evidence="2">
    <location>
        <position position="189"/>
    </location>
    <ligand>
        <name>a 2'-deoxyribonucleoside 5'-triphosphate</name>
        <dbReference type="ChEBI" id="CHEBI:61560"/>
    </ligand>
</feature>
<feature type="binding site" evidence="2">
    <location>
        <position position="190"/>
    </location>
    <ligand>
        <name>a 2'-deoxyribonucleoside 5'-triphosphate</name>
        <dbReference type="ChEBI" id="CHEBI:61560"/>
    </ligand>
</feature>
<feature type="binding site" evidence="2">
    <location>
        <position position="190"/>
    </location>
    <ligand>
        <name>Mg(2+)</name>
        <dbReference type="ChEBI" id="CHEBI:18420"/>
        <label>1</label>
    </ligand>
</feature>
<feature type="binding site" evidence="2">
    <location>
        <position position="190"/>
    </location>
    <ligand>
        <name>Mg(2+)</name>
        <dbReference type="ChEBI" id="CHEBI:18420"/>
        <label>2</label>
    </ligand>
</feature>
<feature type="binding site" evidence="2">
    <location>
        <position position="192"/>
    </location>
    <ligand>
        <name>Mg(2+)</name>
        <dbReference type="ChEBI" id="CHEBI:18420"/>
        <label>1</label>
    </ligand>
</feature>
<feature type="binding site" evidence="2">
    <location>
        <position position="192"/>
    </location>
    <ligand>
        <name>Mg(2+)</name>
        <dbReference type="ChEBI" id="CHEBI:18420"/>
        <label>2</label>
    </ligand>
</feature>
<feature type="binding site" evidence="2">
    <location>
        <position position="256"/>
    </location>
    <ligand>
        <name>Mg(2+)</name>
        <dbReference type="ChEBI" id="CHEBI:18420"/>
        <label>2</label>
    </ligand>
</feature>
<feature type="modified residue" description="N6-acetyllysine" evidence="3">
    <location>
        <position position="72"/>
    </location>
</feature>
<feature type="modified residue" description="Omega-N-methylarginine; by PRMT6" evidence="2">
    <location>
        <position position="83"/>
    </location>
</feature>
<feature type="modified residue" description="Omega-N-methylarginine; by PRMT6" evidence="2">
    <location>
        <position position="152"/>
    </location>
</feature>
<feature type="cross-link" description="Glycyl lysine isopeptide (Lys-Gly) (interchain with G-Cter in ubiquitin)" evidence="2">
    <location>
        <position position="41"/>
    </location>
</feature>
<feature type="cross-link" description="Glycyl lysine isopeptide (Lys-Gly) (interchain with G-Cter in ubiquitin)" evidence="2">
    <location>
        <position position="61"/>
    </location>
</feature>
<feature type="cross-link" description="Glycyl lysine isopeptide (Lys-Gly) (interchain with G-Cter in ubiquitin)" evidence="2">
    <location>
        <position position="81"/>
    </location>
</feature>
<feature type="sequence conflict" description="In Ref. 2; AAD14333." evidence="4" ref="2">
    <original>Q</original>
    <variation>H</variation>
    <location>
        <position position="31"/>
    </location>
</feature>
<dbReference type="EC" id="2.7.7.7" evidence="2"/>
<dbReference type="EC" id="4.2.99.-" evidence="2"/>
<dbReference type="EC" id="4.2.99.18" evidence="2"/>
<dbReference type="EMBL" id="BC103229">
    <property type="protein sequence ID" value="AAI03230.1"/>
    <property type="molecule type" value="mRNA"/>
</dbReference>
<dbReference type="EMBL" id="S80341">
    <property type="protein sequence ID" value="AAD14333.1"/>
    <property type="molecule type" value="Genomic_DNA"/>
</dbReference>
<dbReference type="RefSeq" id="NP_001029936.1">
    <property type="nucleotide sequence ID" value="NM_001034764.1"/>
</dbReference>
<dbReference type="BMRB" id="Q27958"/>
<dbReference type="SMR" id="Q27958"/>
<dbReference type="FunCoup" id="Q27958">
    <property type="interactions" value="1990"/>
</dbReference>
<dbReference type="STRING" id="9913.ENSBTAP00000060165"/>
<dbReference type="PaxDb" id="9913-ENSBTAP00000000276"/>
<dbReference type="Ensembl" id="ENSBTAT00000000276.7">
    <property type="protein sequence ID" value="ENSBTAP00000000276.5"/>
    <property type="gene ID" value="ENSBTAG00000000225.7"/>
</dbReference>
<dbReference type="GeneID" id="614688"/>
<dbReference type="KEGG" id="bta:614688"/>
<dbReference type="CTD" id="5423"/>
<dbReference type="VEuPathDB" id="HostDB:ENSBTAG00000000225"/>
<dbReference type="VGNC" id="VGNC:33112">
    <property type="gene designation" value="POLB"/>
</dbReference>
<dbReference type="eggNOG" id="KOG2534">
    <property type="taxonomic scope" value="Eukaryota"/>
</dbReference>
<dbReference type="GeneTree" id="ENSGT00940000156918"/>
<dbReference type="HOGENOM" id="CLU_008698_1_0_1"/>
<dbReference type="InParanoid" id="Q27958"/>
<dbReference type="OMA" id="ERDVFDW"/>
<dbReference type="OrthoDB" id="205514at2759"/>
<dbReference type="TreeFam" id="TF103002"/>
<dbReference type="Reactome" id="R-BTA-110362">
    <property type="pathway name" value="POLB-Dependent Long Patch Base Excision Repair"/>
</dbReference>
<dbReference type="Reactome" id="R-BTA-110373">
    <property type="pathway name" value="Resolution of AP sites via the multiple-nucleotide patch replacement pathway"/>
</dbReference>
<dbReference type="Reactome" id="R-BTA-110381">
    <property type="pathway name" value="Resolution of AP sites via the single-nucleotide replacement pathway"/>
</dbReference>
<dbReference type="Reactome" id="R-BTA-5649702">
    <property type="pathway name" value="APEX1-Independent Resolution of AP Sites via the Single Nucleotide Replacement Pathway"/>
</dbReference>
<dbReference type="Reactome" id="R-BTA-5651801">
    <property type="pathway name" value="PCNA-Dependent Long Patch Base Excision Repair"/>
</dbReference>
<dbReference type="Reactome" id="R-BTA-5689880">
    <property type="pathway name" value="Ub-specific processing proteases"/>
</dbReference>
<dbReference type="Reactome" id="R-BTA-73930">
    <property type="pathway name" value="Abasic sugar-phosphate removal via the single-nucleotide replacement pathway"/>
</dbReference>
<dbReference type="Proteomes" id="UP000009136">
    <property type="component" value="Chromosome 27"/>
</dbReference>
<dbReference type="Bgee" id="ENSBTAG00000000225">
    <property type="expression patterns" value="Expressed in spermatid and 109 other cell types or tissues"/>
</dbReference>
<dbReference type="GO" id="GO:0005737">
    <property type="term" value="C:cytoplasm"/>
    <property type="evidence" value="ECO:0000250"/>
    <property type="project" value="UniProtKB"/>
</dbReference>
<dbReference type="GO" id="GO:0005634">
    <property type="term" value="C:nucleus"/>
    <property type="evidence" value="ECO:0000318"/>
    <property type="project" value="GO_Central"/>
</dbReference>
<dbReference type="GO" id="GO:0051575">
    <property type="term" value="F:5'-deoxyribose-5-phosphate lyase activity"/>
    <property type="evidence" value="ECO:0007669"/>
    <property type="project" value="RHEA"/>
</dbReference>
<dbReference type="GO" id="GO:0140078">
    <property type="term" value="F:class I DNA-(apurinic or apyrimidinic site) endonuclease activity"/>
    <property type="evidence" value="ECO:0007669"/>
    <property type="project" value="RHEA"/>
</dbReference>
<dbReference type="GO" id="GO:0003677">
    <property type="term" value="F:DNA binding"/>
    <property type="evidence" value="ECO:0007669"/>
    <property type="project" value="UniProtKB-KW"/>
</dbReference>
<dbReference type="GO" id="GO:0003887">
    <property type="term" value="F:DNA-directed DNA polymerase activity"/>
    <property type="evidence" value="ECO:0000314"/>
    <property type="project" value="AgBase"/>
</dbReference>
<dbReference type="GO" id="GO:0016829">
    <property type="term" value="F:lyase activity"/>
    <property type="evidence" value="ECO:0000250"/>
    <property type="project" value="UniProtKB"/>
</dbReference>
<dbReference type="GO" id="GO:0046872">
    <property type="term" value="F:metal ion binding"/>
    <property type="evidence" value="ECO:0007669"/>
    <property type="project" value="UniProtKB-KW"/>
</dbReference>
<dbReference type="GO" id="GO:0006284">
    <property type="term" value="P:base-excision repair"/>
    <property type="evidence" value="ECO:0000250"/>
    <property type="project" value="UniProtKB"/>
</dbReference>
<dbReference type="GO" id="GO:0006974">
    <property type="term" value="P:DNA damage response"/>
    <property type="evidence" value="ECO:0000250"/>
    <property type="project" value="UniProtKB"/>
</dbReference>
<dbReference type="GO" id="GO:0006261">
    <property type="term" value="P:DNA-templated DNA replication"/>
    <property type="evidence" value="ECO:0000314"/>
    <property type="project" value="AgBase"/>
</dbReference>
<dbReference type="GO" id="GO:0006303">
    <property type="term" value="P:double-strand break repair via nonhomologous end joining"/>
    <property type="evidence" value="ECO:0000318"/>
    <property type="project" value="GO_Central"/>
</dbReference>
<dbReference type="CDD" id="cd00141">
    <property type="entry name" value="NT_POLXc"/>
    <property type="match status" value="1"/>
</dbReference>
<dbReference type="FunFam" id="1.10.150.110:FF:000002">
    <property type="entry name" value="DNA polymerase beta"/>
    <property type="match status" value="1"/>
</dbReference>
<dbReference type="FunFam" id="1.10.150.20:FF:000026">
    <property type="entry name" value="DNA polymerase beta"/>
    <property type="match status" value="1"/>
</dbReference>
<dbReference type="FunFam" id="3.30.210.10:FF:000008">
    <property type="entry name" value="DNA polymerase beta"/>
    <property type="match status" value="1"/>
</dbReference>
<dbReference type="FunFam" id="3.30.460.10:FF:000021">
    <property type="entry name" value="DNA polymerase beta"/>
    <property type="match status" value="1"/>
</dbReference>
<dbReference type="Gene3D" id="1.10.150.20">
    <property type="entry name" value="5' to 3' exonuclease, C-terminal subdomain"/>
    <property type="match status" value="1"/>
</dbReference>
<dbReference type="Gene3D" id="3.30.460.10">
    <property type="entry name" value="Beta Polymerase, domain 2"/>
    <property type="match status" value="1"/>
</dbReference>
<dbReference type="Gene3D" id="1.10.150.110">
    <property type="entry name" value="DNA polymerase beta, N-terminal domain-like"/>
    <property type="match status" value="1"/>
</dbReference>
<dbReference type="Gene3D" id="3.30.210.10">
    <property type="entry name" value="DNA polymerase, thumb domain"/>
    <property type="match status" value="1"/>
</dbReference>
<dbReference type="InterPro" id="IPR002054">
    <property type="entry name" value="DNA-dir_DNA_pol_X"/>
</dbReference>
<dbReference type="InterPro" id="IPR019843">
    <property type="entry name" value="DNA_pol-X_BS"/>
</dbReference>
<dbReference type="InterPro" id="IPR010996">
    <property type="entry name" value="DNA_pol_b-like_N"/>
</dbReference>
<dbReference type="InterPro" id="IPR028207">
    <property type="entry name" value="DNA_pol_B_palm_palm"/>
</dbReference>
<dbReference type="InterPro" id="IPR018944">
    <property type="entry name" value="DNA_pol_lambd_fingers_domain"/>
</dbReference>
<dbReference type="InterPro" id="IPR027421">
    <property type="entry name" value="DNA_pol_lamdba_lyase_dom_sf"/>
</dbReference>
<dbReference type="InterPro" id="IPR037160">
    <property type="entry name" value="DNA_Pol_thumb_sf"/>
</dbReference>
<dbReference type="InterPro" id="IPR022312">
    <property type="entry name" value="DNA_pol_X"/>
</dbReference>
<dbReference type="InterPro" id="IPR002008">
    <property type="entry name" value="DNA_pol_X_beta-like"/>
</dbReference>
<dbReference type="InterPro" id="IPR003583">
    <property type="entry name" value="Hlx-hairpin-Hlx_DNA-bd_motif"/>
</dbReference>
<dbReference type="InterPro" id="IPR043519">
    <property type="entry name" value="NT_sf"/>
</dbReference>
<dbReference type="InterPro" id="IPR029398">
    <property type="entry name" value="PolB_thumb"/>
</dbReference>
<dbReference type="PANTHER" id="PTHR11276:SF42">
    <property type="entry name" value="DNA POLYMERASE BETA"/>
    <property type="match status" value="1"/>
</dbReference>
<dbReference type="PANTHER" id="PTHR11276">
    <property type="entry name" value="DNA POLYMERASE TYPE-X FAMILY MEMBER"/>
    <property type="match status" value="1"/>
</dbReference>
<dbReference type="Pfam" id="PF14792">
    <property type="entry name" value="DNA_pol_B_palm"/>
    <property type="match status" value="1"/>
</dbReference>
<dbReference type="Pfam" id="PF14791">
    <property type="entry name" value="DNA_pol_B_thumb"/>
    <property type="match status" value="1"/>
</dbReference>
<dbReference type="Pfam" id="PF10391">
    <property type="entry name" value="DNA_pol_lambd_f"/>
    <property type="match status" value="1"/>
</dbReference>
<dbReference type="Pfam" id="PF14716">
    <property type="entry name" value="HHH_8"/>
    <property type="match status" value="1"/>
</dbReference>
<dbReference type="PRINTS" id="PR00869">
    <property type="entry name" value="DNAPOLX"/>
</dbReference>
<dbReference type="PRINTS" id="PR00870">
    <property type="entry name" value="DNAPOLXBETA"/>
</dbReference>
<dbReference type="SMART" id="SM00278">
    <property type="entry name" value="HhH1"/>
    <property type="match status" value="2"/>
</dbReference>
<dbReference type="SMART" id="SM00483">
    <property type="entry name" value="POLXc"/>
    <property type="match status" value="1"/>
</dbReference>
<dbReference type="SUPFAM" id="SSF47802">
    <property type="entry name" value="DNA polymerase beta, N-terminal domain-like"/>
    <property type="match status" value="1"/>
</dbReference>
<dbReference type="SUPFAM" id="SSF81301">
    <property type="entry name" value="Nucleotidyltransferase"/>
    <property type="match status" value="1"/>
</dbReference>
<dbReference type="SUPFAM" id="SSF81585">
    <property type="entry name" value="PsbU/PolX domain-like"/>
    <property type="match status" value="1"/>
</dbReference>
<dbReference type="PROSITE" id="PS00522">
    <property type="entry name" value="DNA_POLYMERASE_X"/>
    <property type="match status" value="1"/>
</dbReference>
<keyword id="KW-0007">Acetylation</keyword>
<keyword id="KW-0963">Cytoplasm</keyword>
<keyword id="KW-0227">DNA damage</keyword>
<keyword id="KW-0234">DNA repair</keyword>
<keyword id="KW-0235">DNA replication</keyword>
<keyword id="KW-0237">DNA synthesis</keyword>
<keyword id="KW-0238">DNA-binding</keyword>
<keyword id="KW-0239">DNA-directed DNA polymerase</keyword>
<keyword id="KW-1017">Isopeptide bond</keyword>
<keyword id="KW-0456">Lyase</keyword>
<keyword id="KW-0460">Magnesium</keyword>
<keyword id="KW-0479">Metal-binding</keyword>
<keyword id="KW-0488">Methylation</keyword>
<keyword id="KW-0548">Nucleotidyltransferase</keyword>
<keyword id="KW-0539">Nucleus</keyword>
<keyword id="KW-0630">Potassium</keyword>
<keyword id="KW-1185">Reference proteome</keyword>
<keyword id="KW-0915">Sodium</keyword>
<keyword id="KW-0808">Transferase</keyword>
<keyword id="KW-0832">Ubl conjugation</keyword>
<evidence type="ECO:0000250" key="1"/>
<evidence type="ECO:0000250" key="2">
    <source>
        <dbReference type="UniProtKB" id="P06746"/>
    </source>
</evidence>
<evidence type="ECO:0000250" key="3">
    <source>
        <dbReference type="UniProtKB" id="Q8K409"/>
    </source>
</evidence>
<evidence type="ECO:0000305" key="4"/>
<sequence length="335" mass="38267">MSKRKAPQETLNGGITDMLTELANFEKNVNQAIHKYNAYRKAASVIAKYPHKIKSGAEAKKLPGVGTKIAEKIDEFLATGKLRKLEKIRQDDTSSSINFLTRVSGIGPSAARKFVDEGIKTLEDLRKNEDKLNHHQRIGLKYFEDFEKRIPREEMLQMQDIVLSEVKKVDSEYIATVCGSFRRGAESSGDMDVLLTHPSFTSESAKQPKLLHRVVEQLQKVRFITDTLSKGETKFMGVCQLPSKNDEKEYPHRRIDIRLIPKDQYYCGVLYFTGSDIFNKNMRAHALEKGFTINEYTIRPLGVTGVAGEPLPVDSEKDIFDYIQWKYREPKDRSE</sequence>
<protein>
    <recommendedName>
        <fullName evidence="2">DNA polymerase beta</fullName>
        <ecNumber evidence="2">2.7.7.7</ecNumber>
    </recommendedName>
    <alternativeName>
        <fullName evidence="2">5'-deoxyribose-phosphate lyase</fullName>
        <shortName evidence="2">5'-dRP lyase</shortName>
        <ecNumber evidence="2">4.2.99.-</ecNumber>
    </alternativeName>
    <alternativeName>
        <fullName evidence="2">AP lyase</fullName>
        <ecNumber evidence="2">4.2.99.18</ecNumber>
    </alternativeName>
</protein>
<proteinExistence type="evidence at transcript level"/>
<accession>Q27958</accession>
<accession>Q3ZBL6</accession>
<name>DPOLB_BOVIN</name>
<reference key="1">
    <citation type="submission" date="2005-08" db="EMBL/GenBank/DDBJ databases">
        <authorList>
            <consortium name="NIH - Mammalian Gene Collection (MGC) project"/>
        </authorList>
    </citation>
    <scope>NUCLEOTIDE SEQUENCE [LARGE SCALE MRNA]</scope>
    <source>
        <strain>Hereford</strain>
        <tissue>Heart ventricle</tissue>
    </source>
</reference>
<reference key="2">
    <citation type="journal article" date="1995" name="Gene">
        <title>The bovine DNA polymerase beta promoter: cloning, characterization and comparison with the human core promoter.</title>
        <authorList>
            <person name="Chen K.H."/>
            <person name="Wood T."/>
            <person name="He F."/>
            <person name="Narayan S."/>
            <person name="Wilson S.H."/>
        </authorList>
    </citation>
    <scope>NUCLEOTIDE SEQUENCE [GENOMIC DNA] OF 1-39</scope>
    <source>
        <tissue>Testis</tissue>
    </source>
</reference>